<organism>
    <name type="scientific">Arabidopsis thaliana</name>
    <name type="common">Mouse-ear cress</name>
    <dbReference type="NCBI Taxonomy" id="3702"/>
    <lineage>
        <taxon>Eukaryota</taxon>
        <taxon>Viridiplantae</taxon>
        <taxon>Streptophyta</taxon>
        <taxon>Embryophyta</taxon>
        <taxon>Tracheophyta</taxon>
        <taxon>Spermatophyta</taxon>
        <taxon>Magnoliopsida</taxon>
        <taxon>eudicotyledons</taxon>
        <taxon>Gunneridae</taxon>
        <taxon>Pentapetalae</taxon>
        <taxon>rosids</taxon>
        <taxon>malvids</taxon>
        <taxon>Brassicales</taxon>
        <taxon>Brassicaceae</taxon>
        <taxon>Camelineae</taxon>
        <taxon>Arabidopsis</taxon>
    </lineage>
</organism>
<accession>F4J2M6</accession>
<accession>Q9SS42</accession>
<comment type="similarity">
    <text evidence="5">Belongs to the TRAFAC class myosin-kinesin ATPase superfamily. Kinesin family. KIN-14 subfamily.</text>
</comment>
<comment type="sequence caution" evidence="6">
    <conflict type="erroneous gene model prediction">
        <sequence resource="EMBL-CDS" id="AAF02812"/>
    </conflict>
</comment>
<gene>
    <name evidence="6" type="primary">KIN14L</name>
    <name evidence="7" type="ordered locus">At3g10310</name>
    <name evidence="8" type="ORF">F14P13.9</name>
</gene>
<name>KN14L_ARATH</name>
<evidence type="ECO:0000255" key="1"/>
<evidence type="ECO:0000255" key="2">
    <source>
        <dbReference type="PROSITE-ProRule" id="PRU00044"/>
    </source>
</evidence>
<evidence type="ECO:0000255" key="3">
    <source>
        <dbReference type="PROSITE-ProRule" id="PRU00283"/>
    </source>
</evidence>
<evidence type="ECO:0000256" key="4">
    <source>
        <dbReference type="SAM" id="MobiDB-lite"/>
    </source>
</evidence>
<evidence type="ECO:0000303" key="5">
    <source>
    </source>
</evidence>
<evidence type="ECO:0000305" key="6"/>
<evidence type="ECO:0000312" key="7">
    <source>
        <dbReference type="Araport" id="AT3G10310"/>
    </source>
</evidence>
<evidence type="ECO:0000312" key="8">
    <source>
        <dbReference type="EMBL" id="AAF02812.1"/>
    </source>
</evidence>
<keyword id="KW-0067">ATP-binding</keyword>
<keyword id="KW-0175">Coiled coil</keyword>
<keyword id="KW-0493">Microtubule</keyword>
<keyword id="KW-0505">Motor protein</keyword>
<keyword id="KW-0547">Nucleotide-binding</keyword>
<keyword id="KW-1185">Reference proteome</keyword>
<sequence length="955" mass="107010">MTTGLHEFNLASRRAEEAAARRFQAVQWLKSVVGQLGIPNQPSEKEFISCLRNGMILCNAINKIHPGAVSKVVENYSYLNGEYQLPPAYQYFENVRNFLVALETLRLPGFEASDLEKDNLESGSVTKVVDCILGLKAYHECKLPSNGNGLYKHVKTPTFQLSATKIHPTLSASKTSRHLDMSSVRERNDCTDGESDKLKGIAKLFADHIFSSKENIDENLVSLENGSENSRANFEKILSRFPELQSVFKNLLSEGTLKPSDLKSMPLEELPVHEEDQSSRSLSHKTKCNHKRLLKTQEKELAVLKNLFIKTKQDFKEFQVYLQRDLMELGNQMQEMSSAAQGYYKVVEENRKLYNMVQDLKGNIRVYCRVRPIFNSEMDGVIDYIGKDGSLFVLDPSKPYKDARKTFQFNQVFGPTATQDDVFRETQPLIRSVMDGYNVCIFAYGQTGSGKTYTMSGPPGRSATEMGINYLALSDLFLICDRRKDMMTYEIYVQMVEIYNEQVRDLLAENSSYIRTCSSDDDGLSLPDATMHSVNSTKDVLQLMEAGEVNRAVSSTSMNNRSSRSHSIFMVHVRGKDTSGGTLRSCLHLVDLAGSERVDKSEVTGDRLKEAQYINKSLSCLGDVISALAQKNSHIPYRNSKLTLLLQDSLGGQAKTLMFAHLSPEEDSFGETISTLKFAQRVSTVELGAARAHKETREVMHLKEQIENLKRALGTEEWNNVSNGSKEIKSPFSRPIATTERTPPRLRRLSIENCSSTKANLEDRRGIKSPLASRRAQILSLEGPMSCKNEENGKGDPTMEVHQLKNPRSPLSSYQNRAVKVDGRTSIPQLQLLQTPVKGASRNDIQMISVDSKTNGKGSHIRKSLRTIGKLINGSEKRKENIPADPRSPLGVANNFSHIKSPDTSNAKTMRRQSLTGVMPPGQERSRRSSIGGKPIENGKKDHVFTPFRLNKFNN</sequence>
<proteinExistence type="inferred from homology"/>
<dbReference type="EMBL" id="AC009400">
    <property type="protein sequence ID" value="AAF02812.1"/>
    <property type="status" value="ALT_SEQ"/>
    <property type="molecule type" value="Genomic_DNA"/>
</dbReference>
<dbReference type="EMBL" id="CP002686">
    <property type="status" value="NOT_ANNOTATED_CDS"/>
    <property type="molecule type" value="Genomic_DNA"/>
</dbReference>
<dbReference type="SMR" id="F4J2M6"/>
<dbReference type="FunCoup" id="F4J2M6">
    <property type="interactions" value="7"/>
</dbReference>
<dbReference type="STRING" id="3702.F4J2M6"/>
<dbReference type="PaxDb" id="3702-AT3G10310.1"/>
<dbReference type="PeptideAtlas" id="F4J2M6"/>
<dbReference type="ProteomicsDB" id="238191"/>
<dbReference type="Araport" id="AT3G10310"/>
<dbReference type="TAIR" id="AT3G10310"/>
<dbReference type="eggNOG" id="KOG0239">
    <property type="taxonomic scope" value="Eukaryota"/>
</dbReference>
<dbReference type="HOGENOM" id="CLU_001485_8_1_1"/>
<dbReference type="InParanoid" id="F4J2M6"/>
<dbReference type="PRO" id="PR:F4J2M6"/>
<dbReference type="Proteomes" id="UP000006548">
    <property type="component" value="Chromosome 3"/>
</dbReference>
<dbReference type="ExpressionAtlas" id="F4J2M6">
    <property type="expression patterns" value="baseline and differential"/>
</dbReference>
<dbReference type="GO" id="GO:0005874">
    <property type="term" value="C:microtubule"/>
    <property type="evidence" value="ECO:0007669"/>
    <property type="project" value="UniProtKB-KW"/>
</dbReference>
<dbReference type="GO" id="GO:0015630">
    <property type="term" value="C:microtubule cytoskeleton"/>
    <property type="evidence" value="ECO:0000318"/>
    <property type="project" value="GO_Central"/>
</dbReference>
<dbReference type="GO" id="GO:0005524">
    <property type="term" value="F:ATP binding"/>
    <property type="evidence" value="ECO:0007669"/>
    <property type="project" value="UniProtKB-KW"/>
</dbReference>
<dbReference type="GO" id="GO:0008017">
    <property type="term" value="F:microtubule binding"/>
    <property type="evidence" value="ECO:0000318"/>
    <property type="project" value="GO_Central"/>
</dbReference>
<dbReference type="GO" id="GO:0003777">
    <property type="term" value="F:microtubule motor activity"/>
    <property type="evidence" value="ECO:0007669"/>
    <property type="project" value="InterPro"/>
</dbReference>
<dbReference type="GO" id="GO:0007018">
    <property type="term" value="P:microtubule-based movement"/>
    <property type="evidence" value="ECO:0007669"/>
    <property type="project" value="InterPro"/>
</dbReference>
<dbReference type="GO" id="GO:0007017">
    <property type="term" value="P:microtubule-based process"/>
    <property type="evidence" value="ECO:0000318"/>
    <property type="project" value="GO_Central"/>
</dbReference>
<dbReference type="CDD" id="cd21203">
    <property type="entry name" value="CH_AtKIN14-like"/>
    <property type="match status" value="1"/>
</dbReference>
<dbReference type="FunFam" id="3.40.850.10:FF:000103">
    <property type="entry name" value="Kinesin-like protein KIN-14A"/>
    <property type="match status" value="1"/>
</dbReference>
<dbReference type="FunFam" id="1.10.418.10:FF:000073">
    <property type="entry name" value="Kinesin-like protein KIN-14L"/>
    <property type="match status" value="1"/>
</dbReference>
<dbReference type="Gene3D" id="1.10.418.10">
    <property type="entry name" value="Calponin-like domain"/>
    <property type="match status" value="1"/>
</dbReference>
<dbReference type="Gene3D" id="3.40.850.10">
    <property type="entry name" value="Kinesin motor domain"/>
    <property type="match status" value="1"/>
</dbReference>
<dbReference type="InterPro" id="IPR001715">
    <property type="entry name" value="CH_dom"/>
</dbReference>
<dbReference type="InterPro" id="IPR036872">
    <property type="entry name" value="CH_dom_sf"/>
</dbReference>
<dbReference type="InterPro" id="IPR027640">
    <property type="entry name" value="Kinesin-like_fam"/>
</dbReference>
<dbReference type="InterPro" id="IPR001752">
    <property type="entry name" value="Kinesin_motor_dom"/>
</dbReference>
<dbReference type="InterPro" id="IPR036961">
    <property type="entry name" value="Kinesin_motor_dom_sf"/>
</dbReference>
<dbReference type="InterPro" id="IPR027417">
    <property type="entry name" value="P-loop_NTPase"/>
</dbReference>
<dbReference type="PANTHER" id="PTHR47972:SF4">
    <property type="entry name" value="KINESIN-LIKE PROTEIN KIN-14L"/>
    <property type="match status" value="1"/>
</dbReference>
<dbReference type="PANTHER" id="PTHR47972">
    <property type="entry name" value="KINESIN-LIKE PROTEIN KLP-3"/>
    <property type="match status" value="1"/>
</dbReference>
<dbReference type="Pfam" id="PF00307">
    <property type="entry name" value="CH"/>
    <property type="match status" value="1"/>
</dbReference>
<dbReference type="Pfam" id="PF00225">
    <property type="entry name" value="Kinesin"/>
    <property type="match status" value="1"/>
</dbReference>
<dbReference type="PRINTS" id="PR00380">
    <property type="entry name" value="KINESINHEAVY"/>
</dbReference>
<dbReference type="SMART" id="SM00033">
    <property type="entry name" value="CH"/>
    <property type="match status" value="1"/>
</dbReference>
<dbReference type="SMART" id="SM00129">
    <property type="entry name" value="KISc"/>
    <property type="match status" value="1"/>
</dbReference>
<dbReference type="SUPFAM" id="SSF47576">
    <property type="entry name" value="Calponin-homology domain, CH-domain"/>
    <property type="match status" value="1"/>
</dbReference>
<dbReference type="SUPFAM" id="SSF52540">
    <property type="entry name" value="P-loop containing nucleoside triphosphate hydrolases"/>
    <property type="match status" value="1"/>
</dbReference>
<dbReference type="PROSITE" id="PS50021">
    <property type="entry name" value="CH"/>
    <property type="match status" value="1"/>
</dbReference>
<dbReference type="PROSITE" id="PS50067">
    <property type="entry name" value="KINESIN_MOTOR_2"/>
    <property type="match status" value="1"/>
</dbReference>
<protein>
    <recommendedName>
        <fullName evidence="6">Kinesin-like protein KIN-14L</fullName>
    </recommendedName>
</protein>
<feature type="chain" id="PRO_0000438047" description="Kinesin-like protein KIN-14L">
    <location>
        <begin position="1"/>
        <end position="955"/>
    </location>
</feature>
<feature type="domain" description="Calponin-homology (CH)" evidence="2">
    <location>
        <begin position="19"/>
        <end position="140"/>
    </location>
</feature>
<feature type="domain" description="Kinesin motor" evidence="3">
    <location>
        <begin position="363"/>
        <end position="685"/>
    </location>
</feature>
<feature type="region of interest" description="Disordered" evidence="4">
    <location>
        <begin position="878"/>
        <end position="942"/>
    </location>
</feature>
<feature type="coiled-coil region" evidence="1">
    <location>
        <begin position="692"/>
        <end position="719"/>
    </location>
</feature>
<feature type="compositionally biased region" description="Polar residues" evidence="4">
    <location>
        <begin position="894"/>
        <end position="916"/>
    </location>
</feature>
<feature type="binding site" evidence="3">
    <location>
        <begin position="445"/>
        <end position="452"/>
    </location>
    <ligand>
        <name>ATP</name>
        <dbReference type="ChEBI" id="CHEBI:30616"/>
    </ligand>
</feature>
<reference key="1">
    <citation type="journal article" date="2000" name="Nature">
        <title>Sequence and analysis of chromosome 3 of the plant Arabidopsis thaliana.</title>
        <authorList>
            <person name="Salanoubat M."/>
            <person name="Lemcke K."/>
            <person name="Rieger M."/>
            <person name="Ansorge W."/>
            <person name="Unseld M."/>
            <person name="Fartmann B."/>
            <person name="Valle G."/>
            <person name="Bloecker H."/>
            <person name="Perez-Alonso M."/>
            <person name="Obermaier B."/>
            <person name="Delseny M."/>
            <person name="Boutry M."/>
            <person name="Grivell L.A."/>
            <person name="Mache R."/>
            <person name="Puigdomenech P."/>
            <person name="De Simone V."/>
            <person name="Choisne N."/>
            <person name="Artiguenave F."/>
            <person name="Robert C."/>
            <person name="Brottier P."/>
            <person name="Wincker P."/>
            <person name="Cattolico L."/>
            <person name="Weissenbach J."/>
            <person name="Saurin W."/>
            <person name="Quetier F."/>
            <person name="Schaefer M."/>
            <person name="Mueller-Auer S."/>
            <person name="Gabel C."/>
            <person name="Fuchs M."/>
            <person name="Benes V."/>
            <person name="Wurmbach E."/>
            <person name="Drzonek H."/>
            <person name="Erfle H."/>
            <person name="Jordan N."/>
            <person name="Bangert S."/>
            <person name="Wiedelmann R."/>
            <person name="Kranz H."/>
            <person name="Voss H."/>
            <person name="Holland R."/>
            <person name="Brandt P."/>
            <person name="Nyakatura G."/>
            <person name="Vezzi A."/>
            <person name="D'Angelo M."/>
            <person name="Pallavicini A."/>
            <person name="Toppo S."/>
            <person name="Simionati B."/>
            <person name="Conrad A."/>
            <person name="Hornischer K."/>
            <person name="Kauer G."/>
            <person name="Loehnert T.-H."/>
            <person name="Nordsiek G."/>
            <person name="Reichelt J."/>
            <person name="Scharfe M."/>
            <person name="Schoen O."/>
            <person name="Bargues M."/>
            <person name="Terol J."/>
            <person name="Climent J."/>
            <person name="Navarro P."/>
            <person name="Collado C."/>
            <person name="Perez-Perez A."/>
            <person name="Ottenwaelder B."/>
            <person name="Duchemin D."/>
            <person name="Cooke R."/>
            <person name="Laudie M."/>
            <person name="Berger-Llauro C."/>
            <person name="Purnelle B."/>
            <person name="Masuy D."/>
            <person name="de Haan M."/>
            <person name="Maarse A.C."/>
            <person name="Alcaraz J.-P."/>
            <person name="Cottet A."/>
            <person name="Casacuberta E."/>
            <person name="Monfort A."/>
            <person name="Argiriou A."/>
            <person name="Flores M."/>
            <person name="Liguori R."/>
            <person name="Vitale D."/>
            <person name="Mannhaupt G."/>
            <person name="Haase D."/>
            <person name="Schoof H."/>
            <person name="Rudd S."/>
            <person name="Zaccaria P."/>
            <person name="Mewes H.-W."/>
            <person name="Mayer K.F.X."/>
            <person name="Kaul S."/>
            <person name="Town C.D."/>
            <person name="Koo H.L."/>
            <person name="Tallon L.J."/>
            <person name="Jenkins J."/>
            <person name="Rooney T."/>
            <person name="Rizzo M."/>
            <person name="Walts A."/>
            <person name="Utterback T."/>
            <person name="Fujii C.Y."/>
            <person name="Shea T.P."/>
            <person name="Creasy T.H."/>
            <person name="Haas B."/>
            <person name="Maiti R."/>
            <person name="Wu D."/>
            <person name="Peterson J."/>
            <person name="Van Aken S."/>
            <person name="Pai G."/>
            <person name="Militscher J."/>
            <person name="Sellers P."/>
            <person name="Gill J.E."/>
            <person name="Feldblyum T.V."/>
            <person name="Preuss D."/>
            <person name="Lin X."/>
            <person name="Nierman W.C."/>
            <person name="Salzberg S.L."/>
            <person name="White O."/>
            <person name="Venter J.C."/>
            <person name="Fraser C.M."/>
            <person name="Kaneko T."/>
            <person name="Nakamura Y."/>
            <person name="Sato S."/>
            <person name="Kato T."/>
            <person name="Asamizu E."/>
            <person name="Sasamoto S."/>
            <person name="Kimura T."/>
            <person name="Idesawa K."/>
            <person name="Kawashima K."/>
            <person name="Kishida Y."/>
            <person name="Kiyokawa C."/>
            <person name="Kohara M."/>
            <person name="Matsumoto M."/>
            <person name="Matsuno A."/>
            <person name="Muraki A."/>
            <person name="Nakayama S."/>
            <person name="Nakazaki N."/>
            <person name="Shinpo S."/>
            <person name="Takeuchi C."/>
            <person name="Wada T."/>
            <person name="Watanabe A."/>
            <person name="Yamada M."/>
            <person name="Yasuda M."/>
            <person name="Tabata S."/>
        </authorList>
    </citation>
    <scope>NUCLEOTIDE SEQUENCE [LARGE SCALE GENOMIC DNA]</scope>
    <source>
        <strain>cv. Columbia</strain>
    </source>
</reference>
<reference key="2">
    <citation type="journal article" date="2017" name="Plant J.">
        <title>Araport11: a complete reannotation of the Arabidopsis thaliana reference genome.</title>
        <authorList>
            <person name="Cheng C.Y."/>
            <person name="Krishnakumar V."/>
            <person name="Chan A.P."/>
            <person name="Thibaud-Nissen F."/>
            <person name="Schobel S."/>
            <person name="Town C.D."/>
        </authorList>
    </citation>
    <scope>GENOME REANNOTATION</scope>
    <source>
        <strain>cv. Columbia</strain>
    </source>
</reference>
<reference key="3">
    <citation type="journal article" date="2001" name="BMC Genomics">
        <title>Kinesins in the Arabidopsis genome: a comparative analysis among eukaryotes.</title>
        <authorList>
            <person name="Reddy A.S."/>
            <person name="Day I.S."/>
        </authorList>
    </citation>
    <scope>GENE FAMILY</scope>
</reference>
<reference key="4">
    <citation type="journal article" date="2006" name="BMC Genomics">
        <title>Comprehensive comparative analysis of kinesins in photosynthetic eukaryotes.</title>
        <authorList>
            <person name="Richardson D.N."/>
            <person name="Simmons M.P."/>
            <person name="Reddy A.S."/>
        </authorList>
    </citation>
    <scope>GENE FAMILY</scope>
    <scope>NOMENCLATURE</scope>
</reference>
<reference key="5">
    <citation type="journal article" date="2012" name="Protoplasma">
        <title>Functions of the Arabidopsis kinesin superfamily of microtubule-based motor proteins.</title>
        <authorList>
            <person name="Zhu C."/>
            <person name="Dixit R."/>
        </authorList>
    </citation>
    <scope>REVIEW</scope>
</reference>